<name>RL17_KINRD</name>
<accession>A6W5W6</accession>
<organism>
    <name type="scientific">Kineococcus radiotolerans (strain ATCC BAA-149 / DSM 14245 / SRS30216)</name>
    <dbReference type="NCBI Taxonomy" id="266940"/>
    <lineage>
        <taxon>Bacteria</taxon>
        <taxon>Bacillati</taxon>
        <taxon>Actinomycetota</taxon>
        <taxon>Actinomycetes</taxon>
        <taxon>Kineosporiales</taxon>
        <taxon>Kineosporiaceae</taxon>
        <taxon>Kineococcus</taxon>
    </lineage>
</organism>
<evidence type="ECO:0000255" key="1">
    <source>
        <dbReference type="HAMAP-Rule" id="MF_01368"/>
    </source>
</evidence>
<evidence type="ECO:0000256" key="2">
    <source>
        <dbReference type="SAM" id="MobiDB-lite"/>
    </source>
</evidence>
<evidence type="ECO:0000305" key="3"/>
<keyword id="KW-1185">Reference proteome</keyword>
<keyword id="KW-0687">Ribonucleoprotein</keyword>
<keyword id="KW-0689">Ribosomal protein</keyword>
<comment type="subunit">
    <text evidence="1">Part of the 50S ribosomal subunit. Contacts protein L32.</text>
</comment>
<comment type="similarity">
    <text evidence="1">Belongs to the bacterial ribosomal protein bL17 family.</text>
</comment>
<sequence length="202" mass="21263">MPTPTKGPRLGGGPAHEKLILANLATALFEHRSITTTEAKAKRLRPHAEKLISFAKKGDLASRRQVMKTIRDKSVVHFLFTEIGPAMAERNGGYTRIVKIGPRKGDNAPMAVIQLVMEPVSAKQGVVREAERAAAVSAPAADEVVVGDEAPAAESTDAAQVEAGGVEQPDTLPDADAPATADEGVEVDAAEVDPSDEKKDQA</sequence>
<dbReference type="EMBL" id="CP000750">
    <property type="protein sequence ID" value="ABS02205.1"/>
    <property type="molecule type" value="Genomic_DNA"/>
</dbReference>
<dbReference type="SMR" id="A6W5W6"/>
<dbReference type="STRING" id="266940.Krad_0716"/>
<dbReference type="KEGG" id="kra:Krad_0716"/>
<dbReference type="eggNOG" id="COG0203">
    <property type="taxonomic scope" value="Bacteria"/>
</dbReference>
<dbReference type="HOGENOM" id="CLU_074407_0_0_11"/>
<dbReference type="OrthoDB" id="9809073at2"/>
<dbReference type="Proteomes" id="UP000001116">
    <property type="component" value="Chromosome"/>
</dbReference>
<dbReference type="GO" id="GO:0022625">
    <property type="term" value="C:cytosolic large ribosomal subunit"/>
    <property type="evidence" value="ECO:0007669"/>
    <property type="project" value="TreeGrafter"/>
</dbReference>
<dbReference type="GO" id="GO:0003735">
    <property type="term" value="F:structural constituent of ribosome"/>
    <property type="evidence" value="ECO:0007669"/>
    <property type="project" value="InterPro"/>
</dbReference>
<dbReference type="GO" id="GO:0006412">
    <property type="term" value="P:translation"/>
    <property type="evidence" value="ECO:0007669"/>
    <property type="project" value="UniProtKB-UniRule"/>
</dbReference>
<dbReference type="FunFam" id="3.90.1030.10:FF:000001">
    <property type="entry name" value="50S ribosomal protein L17"/>
    <property type="match status" value="1"/>
</dbReference>
<dbReference type="Gene3D" id="3.90.1030.10">
    <property type="entry name" value="Ribosomal protein L17"/>
    <property type="match status" value="1"/>
</dbReference>
<dbReference type="HAMAP" id="MF_01368">
    <property type="entry name" value="Ribosomal_bL17"/>
    <property type="match status" value="1"/>
</dbReference>
<dbReference type="InterPro" id="IPR000456">
    <property type="entry name" value="Ribosomal_bL17"/>
</dbReference>
<dbReference type="InterPro" id="IPR036373">
    <property type="entry name" value="Ribosomal_bL17_sf"/>
</dbReference>
<dbReference type="NCBIfam" id="TIGR00059">
    <property type="entry name" value="L17"/>
    <property type="match status" value="1"/>
</dbReference>
<dbReference type="PANTHER" id="PTHR14413:SF16">
    <property type="entry name" value="LARGE RIBOSOMAL SUBUNIT PROTEIN BL17M"/>
    <property type="match status" value="1"/>
</dbReference>
<dbReference type="PANTHER" id="PTHR14413">
    <property type="entry name" value="RIBOSOMAL PROTEIN L17"/>
    <property type="match status" value="1"/>
</dbReference>
<dbReference type="Pfam" id="PF01196">
    <property type="entry name" value="Ribosomal_L17"/>
    <property type="match status" value="1"/>
</dbReference>
<dbReference type="SUPFAM" id="SSF64263">
    <property type="entry name" value="Prokaryotic ribosomal protein L17"/>
    <property type="match status" value="1"/>
</dbReference>
<protein>
    <recommendedName>
        <fullName evidence="1">Large ribosomal subunit protein bL17</fullName>
    </recommendedName>
    <alternativeName>
        <fullName evidence="3">50S ribosomal protein L17</fullName>
    </alternativeName>
</protein>
<feature type="chain" id="PRO_1000087177" description="Large ribosomal subunit protein bL17">
    <location>
        <begin position="1"/>
        <end position="202"/>
    </location>
</feature>
<feature type="region of interest" description="Disordered" evidence="2">
    <location>
        <begin position="148"/>
        <end position="202"/>
    </location>
</feature>
<feature type="compositionally biased region" description="Low complexity" evidence="2">
    <location>
        <begin position="169"/>
        <end position="182"/>
    </location>
</feature>
<feature type="compositionally biased region" description="Acidic residues" evidence="2">
    <location>
        <begin position="183"/>
        <end position="194"/>
    </location>
</feature>
<proteinExistence type="inferred from homology"/>
<reference key="1">
    <citation type="journal article" date="2008" name="PLoS ONE">
        <title>Survival in nuclear waste, extreme resistance, and potential applications gleaned from the genome sequence of Kineococcus radiotolerans SRS30216.</title>
        <authorList>
            <person name="Bagwell C.E."/>
            <person name="Bhat S."/>
            <person name="Hawkins G.M."/>
            <person name="Smith B.W."/>
            <person name="Biswas T."/>
            <person name="Hoover T.R."/>
            <person name="Saunders E."/>
            <person name="Han C.S."/>
            <person name="Tsodikov O.V."/>
            <person name="Shimkets L.J."/>
        </authorList>
    </citation>
    <scope>NUCLEOTIDE SEQUENCE [LARGE SCALE GENOMIC DNA]</scope>
    <source>
        <strain>ATCC BAA-149 / DSM 14245 / SRS30216</strain>
    </source>
</reference>
<gene>
    <name evidence="1" type="primary">rplQ</name>
    <name type="ordered locus">Krad_0716</name>
</gene>